<evidence type="ECO:0000255" key="1">
    <source>
        <dbReference type="HAMAP-Rule" id="MF_01080"/>
    </source>
</evidence>
<keyword id="KW-0413">Isomerase</keyword>
<keyword id="KW-1185">Reference proteome</keyword>
<keyword id="KW-0819">tRNA processing</keyword>
<proteinExistence type="inferred from homology"/>
<sequence length="308" mass="33085">MSRRRRGQAIHGWLAIDKPVGITSTDVVNRLRRTMDAAKVGHGGTLDPLASGVLPIAFGEATKTVSYVMDGTKVYHMVVGWGEARDTDDREGKVIDTSDVRPDAQAITAMLARFTGEIEQVPPIYSAVKVEGRRSYDLARADQAVELKSRKILIKDLTLLETSTPDFGHFRIVSGKGAYMRSLARDLALALGTVGHVVALRRLACGPFTAETAISLDMVDALGHDAPHSESLLPIEAALADIPAVPLTEAEARRLSQGQPVSLLHLASRTPLNGLAQGETVQALLNGKLVALAKIVEGEIRPLRVVNL</sequence>
<name>TRUB_RHORT</name>
<comment type="function">
    <text evidence="1">Responsible for synthesis of pseudouridine from uracil-55 in the psi GC loop of transfer RNAs.</text>
</comment>
<comment type="catalytic activity">
    <reaction evidence="1">
        <text>uridine(55) in tRNA = pseudouridine(55) in tRNA</text>
        <dbReference type="Rhea" id="RHEA:42532"/>
        <dbReference type="Rhea" id="RHEA-COMP:10101"/>
        <dbReference type="Rhea" id="RHEA-COMP:10102"/>
        <dbReference type="ChEBI" id="CHEBI:65314"/>
        <dbReference type="ChEBI" id="CHEBI:65315"/>
        <dbReference type="EC" id="5.4.99.25"/>
    </reaction>
</comment>
<comment type="similarity">
    <text evidence="1">Belongs to the pseudouridine synthase TruB family. Type 1 subfamily.</text>
</comment>
<feature type="chain" id="PRO_0000229378" description="tRNA pseudouridine synthase B">
    <location>
        <begin position="1"/>
        <end position="308"/>
    </location>
</feature>
<feature type="active site" description="Nucleophile" evidence="1">
    <location>
        <position position="47"/>
    </location>
</feature>
<reference key="1">
    <citation type="journal article" date="2011" name="Stand. Genomic Sci.">
        <title>Complete genome sequence of Rhodospirillum rubrum type strain (S1).</title>
        <authorList>
            <person name="Munk A.C."/>
            <person name="Copeland A."/>
            <person name="Lucas S."/>
            <person name="Lapidus A."/>
            <person name="Del Rio T.G."/>
            <person name="Barry K."/>
            <person name="Detter J.C."/>
            <person name="Hammon N."/>
            <person name="Israni S."/>
            <person name="Pitluck S."/>
            <person name="Brettin T."/>
            <person name="Bruce D."/>
            <person name="Han C."/>
            <person name="Tapia R."/>
            <person name="Gilna P."/>
            <person name="Schmutz J."/>
            <person name="Larimer F."/>
            <person name="Land M."/>
            <person name="Kyrpides N.C."/>
            <person name="Mavromatis K."/>
            <person name="Richardson P."/>
            <person name="Rohde M."/>
            <person name="Goeker M."/>
            <person name="Klenk H.P."/>
            <person name="Zhang Y."/>
            <person name="Roberts G.P."/>
            <person name="Reslewic S."/>
            <person name="Schwartz D.C."/>
        </authorList>
    </citation>
    <scope>NUCLEOTIDE SEQUENCE [LARGE SCALE GENOMIC DNA]</scope>
    <source>
        <strain>ATCC 11170 / ATH 1.1.1 / DSM 467 / LMG 4362 / NCIMB 8255 / S1</strain>
    </source>
</reference>
<protein>
    <recommendedName>
        <fullName evidence="1">tRNA pseudouridine synthase B</fullName>
        <ecNumber evidence="1">5.4.99.25</ecNumber>
    </recommendedName>
    <alternativeName>
        <fullName evidence="1">tRNA pseudouridine(55) synthase</fullName>
        <shortName evidence="1">Psi55 synthase</shortName>
    </alternativeName>
    <alternativeName>
        <fullName evidence="1">tRNA pseudouridylate synthase</fullName>
    </alternativeName>
    <alternativeName>
        <fullName evidence="1">tRNA-uridine isomerase</fullName>
    </alternativeName>
</protein>
<organism>
    <name type="scientific">Rhodospirillum rubrum (strain ATCC 11170 / ATH 1.1.1 / DSM 467 / LMG 4362 / NCIMB 8255 / S1)</name>
    <dbReference type="NCBI Taxonomy" id="269796"/>
    <lineage>
        <taxon>Bacteria</taxon>
        <taxon>Pseudomonadati</taxon>
        <taxon>Pseudomonadota</taxon>
        <taxon>Alphaproteobacteria</taxon>
        <taxon>Rhodospirillales</taxon>
        <taxon>Rhodospirillaceae</taxon>
        <taxon>Rhodospirillum</taxon>
    </lineage>
</organism>
<dbReference type="EC" id="5.4.99.25" evidence="1"/>
<dbReference type="EMBL" id="CP000230">
    <property type="protein sequence ID" value="ABC24577.1"/>
    <property type="molecule type" value="Genomic_DNA"/>
</dbReference>
<dbReference type="RefSeq" id="WP_011391530.1">
    <property type="nucleotide sequence ID" value="NC_007643.1"/>
</dbReference>
<dbReference type="RefSeq" id="YP_428864.1">
    <property type="nucleotide sequence ID" value="NC_007643.1"/>
</dbReference>
<dbReference type="SMR" id="Q2RMR8"/>
<dbReference type="STRING" id="269796.Rru_A3783"/>
<dbReference type="EnsemblBacteria" id="ABC24577">
    <property type="protein sequence ID" value="ABC24577"/>
    <property type="gene ID" value="Rru_A3783"/>
</dbReference>
<dbReference type="KEGG" id="rru:Rru_A3783"/>
<dbReference type="PATRIC" id="fig|269796.9.peg.3905"/>
<dbReference type="eggNOG" id="COG0130">
    <property type="taxonomic scope" value="Bacteria"/>
</dbReference>
<dbReference type="HOGENOM" id="CLU_032087_0_3_5"/>
<dbReference type="PhylomeDB" id="Q2RMR8"/>
<dbReference type="Proteomes" id="UP000001929">
    <property type="component" value="Chromosome"/>
</dbReference>
<dbReference type="GO" id="GO:0003723">
    <property type="term" value="F:RNA binding"/>
    <property type="evidence" value="ECO:0007669"/>
    <property type="project" value="InterPro"/>
</dbReference>
<dbReference type="GO" id="GO:0160148">
    <property type="term" value="F:tRNA pseudouridine(55) synthase activity"/>
    <property type="evidence" value="ECO:0007669"/>
    <property type="project" value="UniProtKB-EC"/>
</dbReference>
<dbReference type="GO" id="GO:1990481">
    <property type="term" value="P:mRNA pseudouridine synthesis"/>
    <property type="evidence" value="ECO:0007669"/>
    <property type="project" value="TreeGrafter"/>
</dbReference>
<dbReference type="GO" id="GO:0031119">
    <property type="term" value="P:tRNA pseudouridine synthesis"/>
    <property type="evidence" value="ECO:0007669"/>
    <property type="project" value="UniProtKB-UniRule"/>
</dbReference>
<dbReference type="CDD" id="cd02573">
    <property type="entry name" value="PseudoU_synth_EcTruB"/>
    <property type="match status" value="1"/>
</dbReference>
<dbReference type="CDD" id="cd21152">
    <property type="entry name" value="PUA_TruB_bacterial"/>
    <property type="match status" value="1"/>
</dbReference>
<dbReference type="Gene3D" id="3.30.2350.10">
    <property type="entry name" value="Pseudouridine synthase"/>
    <property type="match status" value="1"/>
</dbReference>
<dbReference type="HAMAP" id="MF_01080">
    <property type="entry name" value="TruB_bact"/>
    <property type="match status" value="1"/>
</dbReference>
<dbReference type="InterPro" id="IPR020103">
    <property type="entry name" value="PsdUridine_synth_cat_dom_sf"/>
</dbReference>
<dbReference type="InterPro" id="IPR002501">
    <property type="entry name" value="PsdUridine_synth_N"/>
</dbReference>
<dbReference type="InterPro" id="IPR014780">
    <property type="entry name" value="tRNA_psdUridine_synth_TruB"/>
</dbReference>
<dbReference type="InterPro" id="IPR032819">
    <property type="entry name" value="TruB_C"/>
</dbReference>
<dbReference type="NCBIfam" id="TIGR00431">
    <property type="entry name" value="TruB"/>
    <property type="match status" value="1"/>
</dbReference>
<dbReference type="PANTHER" id="PTHR13767:SF2">
    <property type="entry name" value="PSEUDOURIDYLATE SYNTHASE TRUB1"/>
    <property type="match status" value="1"/>
</dbReference>
<dbReference type="PANTHER" id="PTHR13767">
    <property type="entry name" value="TRNA-PSEUDOURIDINE SYNTHASE"/>
    <property type="match status" value="1"/>
</dbReference>
<dbReference type="Pfam" id="PF16198">
    <property type="entry name" value="TruB_C_2"/>
    <property type="match status" value="1"/>
</dbReference>
<dbReference type="Pfam" id="PF01509">
    <property type="entry name" value="TruB_N"/>
    <property type="match status" value="1"/>
</dbReference>
<dbReference type="SUPFAM" id="SSF55120">
    <property type="entry name" value="Pseudouridine synthase"/>
    <property type="match status" value="1"/>
</dbReference>
<gene>
    <name evidence="1" type="primary">truB</name>
    <name type="ordered locus">Rru_A3783</name>
</gene>
<accession>Q2RMR8</accession>